<organism>
    <name type="scientific">Human cytomegalovirus (strain AD169)</name>
    <name type="common">HHV-5</name>
    <name type="synonym">Human herpesvirus 5</name>
    <dbReference type="NCBI Taxonomy" id="10360"/>
    <lineage>
        <taxon>Viruses</taxon>
        <taxon>Duplodnaviria</taxon>
        <taxon>Heunggongvirae</taxon>
        <taxon>Peploviricota</taxon>
        <taxon>Herviviricetes</taxon>
        <taxon>Herpesvirales</taxon>
        <taxon>Orthoherpesviridae</taxon>
        <taxon>Betaherpesvirinae</taxon>
        <taxon>Cytomegalovirus</taxon>
        <taxon>Cytomegalovirus humanbeta5</taxon>
        <taxon>Human cytomegalovirus</taxon>
    </lineage>
</organism>
<dbReference type="EMBL" id="X17403">
    <property type="protein sequence ID" value="CAA35420.1"/>
    <property type="molecule type" value="Genomic_DNA"/>
</dbReference>
<dbReference type="PIR" id="S09784">
    <property type="entry name" value="S09784"/>
</dbReference>
<dbReference type="Proteomes" id="UP000008991">
    <property type="component" value="Segment"/>
</dbReference>
<accession>P16759</accession>
<reference key="1">
    <citation type="journal article" date="1990" name="Curr. Top. Microbiol. Immunol.">
        <title>Analysis of the protein-coding content of the sequence of human cytomegalovirus strain AD169.</title>
        <authorList>
            <person name="Chee M.S."/>
            <person name="Bankier A.T."/>
            <person name="Beck S."/>
            <person name="Bohni R."/>
            <person name="Brown C.M."/>
            <person name="Cerny R."/>
            <person name="Horsnell T."/>
            <person name="Hutchison C.A. III"/>
            <person name="Kouzarides T."/>
            <person name="Martignetti J.A."/>
            <person name="Preddie E."/>
            <person name="Satchwell S.C."/>
            <person name="Tomlinson P."/>
            <person name="Weston K.M."/>
            <person name="Barrell B.G."/>
        </authorList>
    </citation>
    <scope>NUCLEOTIDE SEQUENCE [LARGE SCALE GENOMIC DNA]</scope>
</reference>
<feature type="chain" id="PRO_0000115312" description="Uncharacterized protein UL21">
    <location>
        <begin position="1"/>
        <end position="175"/>
    </location>
</feature>
<name>UL21_HCMVA</name>
<proteinExistence type="predicted"/>
<sequence>MWPLLKNNVVRTGRRYAVFQPRRFTPRPQHDAFGTKDDVRGFTVFSHAACGASLMDPLSPSRWEVALFPSSPPSLKDSCHLCAWTFGLAGPCAAWLSTRRELVGGFSKIIYIQNSAECWSVRETKRCCRICRWRSTSSSTDLRSNPYPIRWCYCWTMFPPMYPVLLLTASPVPTP</sequence>
<gene>
    <name type="primary">UL21</name>
</gene>
<protein>
    <recommendedName>
        <fullName>Uncharacterized protein UL21</fullName>
    </recommendedName>
</protein>
<organismHost>
    <name type="scientific">Homo sapiens</name>
    <name type="common">Human</name>
    <dbReference type="NCBI Taxonomy" id="9606"/>
</organismHost>